<gene>
    <name evidence="1" type="primary">rlmE</name>
    <name evidence="1" type="synonym">ftsJ</name>
    <name evidence="1" type="synonym">rrmJ</name>
    <name type="ordered locus">EcolC_0521</name>
</gene>
<organism>
    <name type="scientific">Escherichia coli (strain ATCC 8739 / DSM 1576 / NBRC 3972 / NCIMB 8545 / WDCM 00012 / Crooks)</name>
    <dbReference type="NCBI Taxonomy" id="481805"/>
    <lineage>
        <taxon>Bacteria</taxon>
        <taxon>Pseudomonadati</taxon>
        <taxon>Pseudomonadota</taxon>
        <taxon>Gammaproteobacteria</taxon>
        <taxon>Enterobacterales</taxon>
        <taxon>Enterobacteriaceae</taxon>
        <taxon>Escherichia</taxon>
    </lineage>
</organism>
<name>RLME_ECOLC</name>
<evidence type="ECO:0000255" key="1">
    <source>
        <dbReference type="HAMAP-Rule" id="MF_01547"/>
    </source>
</evidence>
<keyword id="KW-0963">Cytoplasm</keyword>
<keyword id="KW-0489">Methyltransferase</keyword>
<keyword id="KW-0698">rRNA processing</keyword>
<keyword id="KW-0949">S-adenosyl-L-methionine</keyword>
<keyword id="KW-0808">Transferase</keyword>
<reference key="1">
    <citation type="submission" date="2008-02" db="EMBL/GenBank/DDBJ databases">
        <title>Complete sequence of Escherichia coli C str. ATCC 8739.</title>
        <authorList>
            <person name="Copeland A."/>
            <person name="Lucas S."/>
            <person name="Lapidus A."/>
            <person name="Glavina del Rio T."/>
            <person name="Dalin E."/>
            <person name="Tice H."/>
            <person name="Bruce D."/>
            <person name="Goodwin L."/>
            <person name="Pitluck S."/>
            <person name="Kiss H."/>
            <person name="Brettin T."/>
            <person name="Detter J.C."/>
            <person name="Han C."/>
            <person name="Kuske C.R."/>
            <person name="Schmutz J."/>
            <person name="Larimer F."/>
            <person name="Land M."/>
            <person name="Hauser L."/>
            <person name="Kyrpides N."/>
            <person name="Mikhailova N."/>
            <person name="Ingram L."/>
            <person name="Richardson P."/>
        </authorList>
    </citation>
    <scope>NUCLEOTIDE SEQUENCE [LARGE SCALE GENOMIC DNA]</scope>
    <source>
        <strain>ATCC 8739 / DSM 1576 / NBRC 3972 / NCIMB 8545 / WDCM 00012 / Crooks</strain>
    </source>
</reference>
<sequence length="209" mass="23335">MTGKKRSASSSRWLQEHFSDKYVQQAQKKGLRSRAWFKLDEIQQSDKLFKPGMTVVDLGAAPGGWSQYVVTQIGGKGRIIACDLLPMDPIVGVDFLQGDFRDELVMKALLERVGDSKVQVVMSDMAPNMSGTPAVDIPRAMYLVELALEMCRDVLAPGGSFVVKVFQGEGFDEYLREIRSLFTKVKVRKPDSSRARSREVYIVATGRKP</sequence>
<feature type="chain" id="PRO_1000087684" description="Ribosomal RNA large subunit methyltransferase E">
    <location>
        <begin position="1"/>
        <end position="209"/>
    </location>
</feature>
<feature type="active site" description="Proton acceptor" evidence="1">
    <location>
        <position position="164"/>
    </location>
</feature>
<feature type="binding site" evidence="1">
    <location>
        <position position="63"/>
    </location>
    <ligand>
        <name>S-adenosyl-L-methionine</name>
        <dbReference type="ChEBI" id="CHEBI:59789"/>
    </ligand>
</feature>
<feature type="binding site" evidence="1">
    <location>
        <position position="65"/>
    </location>
    <ligand>
        <name>S-adenosyl-L-methionine</name>
        <dbReference type="ChEBI" id="CHEBI:59789"/>
    </ligand>
</feature>
<feature type="binding site" evidence="1">
    <location>
        <position position="83"/>
    </location>
    <ligand>
        <name>S-adenosyl-L-methionine</name>
        <dbReference type="ChEBI" id="CHEBI:59789"/>
    </ligand>
</feature>
<feature type="binding site" evidence="1">
    <location>
        <position position="99"/>
    </location>
    <ligand>
        <name>S-adenosyl-L-methionine</name>
        <dbReference type="ChEBI" id="CHEBI:59789"/>
    </ligand>
</feature>
<feature type="binding site" evidence="1">
    <location>
        <position position="124"/>
    </location>
    <ligand>
        <name>S-adenosyl-L-methionine</name>
        <dbReference type="ChEBI" id="CHEBI:59789"/>
    </ligand>
</feature>
<dbReference type="EC" id="2.1.1.166" evidence="1"/>
<dbReference type="EMBL" id="CP000946">
    <property type="protein sequence ID" value="ACA76198.1"/>
    <property type="molecule type" value="Genomic_DNA"/>
</dbReference>
<dbReference type="RefSeq" id="WP_000145975.1">
    <property type="nucleotide sequence ID" value="NZ_MTFT01000027.1"/>
</dbReference>
<dbReference type="SMR" id="B1IQU4"/>
<dbReference type="GeneID" id="93778802"/>
<dbReference type="KEGG" id="ecl:EcolC_0521"/>
<dbReference type="HOGENOM" id="CLU_009422_4_0_6"/>
<dbReference type="GO" id="GO:0005737">
    <property type="term" value="C:cytoplasm"/>
    <property type="evidence" value="ECO:0007669"/>
    <property type="project" value="UniProtKB-SubCell"/>
</dbReference>
<dbReference type="GO" id="GO:0008650">
    <property type="term" value="F:rRNA (uridine-2'-O-)-methyltransferase activity"/>
    <property type="evidence" value="ECO:0007669"/>
    <property type="project" value="UniProtKB-UniRule"/>
</dbReference>
<dbReference type="CDD" id="cd02440">
    <property type="entry name" value="AdoMet_MTases"/>
    <property type="match status" value="1"/>
</dbReference>
<dbReference type="FunFam" id="3.40.50.150:FF:000005">
    <property type="entry name" value="Ribosomal RNA large subunit methyltransferase E"/>
    <property type="match status" value="1"/>
</dbReference>
<dbReference type="Gene3D" id="3.40.50.150">
    <property type="entry name" value="Vaccinia Virus protein VP39"/>
    <property type="match status" value="1"/>
</dbReference>
<dbReference type="HAMAP" id="MF_01547">
    <property type="entry name" value="RNA_methyltr_E"/>
    <property type="match status" value="1"/>
</dbReference>
<dbReference type="InterPro" id="IPR050082">
    <property type="entry name" value="RNA_methyltr_RlmE"/>
</dbReference>
<dbReference type="InterPro" id="IPR002877">
    <property type="entry name" value="RNA_MeTrfase_FtsJ_dom"/>
</dbReference>
<dbReference type="InterPro" id="IPR015507">
    <property type="entry name" value="rRNA-MeTfrase_E"/>
</dbReference>
<dbReference type="InterPro" id="IPR004512">
    <property type="entry name" value="rRNA_MeTrfase_gammaproteobac"/>
</dbReference>
<dbReference type="InterPro" id="IPR029063">
    <property type="entry name" value="SAM-dependent_MTases_sf"/>
</dbReference>
<dbReference type="NCBIfam" id="NF008390">
    <property type="entry name" value="PRK11188.1"/>
    <property type="match status" value="1"/>
</dbReference>
<dbReference type="NCBIfam" id="TIGR00438">
    <property type="entry name" value="rrmJ"/>
    <property type="match status" value="1"/>
</dbReference>
<dbReference type="PANTHER" id="PTHR10920">
    <property type="entry name" value="RIBOSOMAL RNA METHYLTRANSFERASE"/>
    <property type="match status" value="1"/>
</dbReference>
<dbReference type="PANTHER" id="PTHR10920:SF18">
    <property type="entry name" value="RRNA METHYLTRANSFERASE 2, MITOCHONDRIAL"/>
    <property type="match status" value="1"/>
</dbReference>
<dbReference type="Pfam" id="PF01728">
    <property type="entry name" value="FtsJ"/>
    <property type="match status" value="1"/>
</dbReference>
<dbReference type="PIRSF" id="PIRSF005461">
    <property type="entry name" value="23S_rRNA_mtase"/>
    <property type="match status" value="1"/>
</dbReference>
<dbReference type="SUPFAM" id="SSF53335">
    <property type="entry name" value="S-adenosyl-L-methionine-dependent methyltransferases"/>
    <property type="match status" value="1"/>
</dbReference>
<proteinExistence type="inferred from homology"/>
<accession>B1IQU4</accession>
<comment type="function">
    <text evidence="1">Specifically methylates the uridine in position 2552 of 23S rRNA at the 2'-O position of the ribose in the fully assembled 50S ribosomal subunit.</text>
</comment>
<comment type="catalytic activity">
    <reaction evidence="1">
        <text>uridine(2552) in 23S rRNA + S-adenosyl-L-methionine = 2'-O-methyluridine(2552) in 23S rRNA + S-adenosyl-L-homocysteine + H(+)</text>
        <dbReference type="Rhea" id="RHEA:42720"/>
        <dbReference type="Rhea" id="RHEA-COMP:10202"/>
        <dbReference type="Rhea" id="RHEA-COMP:10203"/>
        <dbReference type="ChEBI" id="CHEBI:15378"/>
        <dbReference type="ChEBI" id="CHEBI:57856"/>
        <dbReference type="ChEBI" id="CHEBI:59789"/>
        <dbReference type="ChEBI" id="CHEBI:65315"/>
        <dbReference type="ChEBI" id="CHEBI:74478"/>
        <dbReference type="EC" id="2.1.1.166"/>
    </reaction>
</comment>
<comment type="subcellular location">
    <subcellularLocation>
        <location evidence="1">Cytoplasm</location>
    </subcellularLocation>
</comment>
<comment type="similarity">
    <text evidence="1">Belongs to the class I-like SAM-binding methyltransferase superfamily. RNA methyltransferase RlmE family.</text>
</comment>
<protein>
    <recommendedName>
        <fullName evidence="1">Ribosomal RNA large subunit methyltransferase E</fullName>
        <ecNumber evidence="1">2.1.1.166</ecNumber>
    </recommendedName>
    <alternativeName>
        <fullName evidence="1">23S rRNA Um2552 methyltransferase</fullName>
    </alternativeName>
    <alternativeName>
        <fullName evidence="1">rRNA (uridine-2'-O-)-methyltransferase</fullName>
    </alternativeName>
</protein>